<gene>
    <name type="primary">Trh</name>
</gene>
<sequence>MPGPWLLLALALIFTLTGIPESCALPEAAQEEGAVTPDLPGLENVQVRPERRFLWKDLQRVRGDLGAALDSWITKRQHPGKREEEEKDIEAEERGDLGEGGAWRLHKRQHPGRRANQDKYSWADEEDSDWMPRSWLPDFFLDSWFSDVPQVKRQHPGRRSFPWMESDVTKRQHPGRRFIDPELQRSWEEKEGEGVLMPEKRQHPGKRALGHPCGPQGTCGQTGLLQLLGDLSRGQETLVKQSPQVEPWDKEPLEE</sequence>
<protein>
    <recommendedName>
        <fullName>Pro-thyrotropin-releasing hormone</fullName>
        <shortName>Pro-TRH</shortName>
    </recommendedName>
    <alternativeName>
        <fullName>Prothyroliberin</fullName>
    </alternativeName>
    <component>
        <recommendedName>
            <fullName>Thyrotropin-releasing hormone</fullName>
            <shortName>TRH</shortName>
        </recommendedName>
        <alternativeName>
            <fullName>Protirelin</fullName>
        </alternativeName>
        <alternativeName>
            <fullName>TSH-releasing factor</fullName>
        </alternativeName>
        <alternativeName>
            <fullName>Thyroliberin</fullName>
        </alternativeName>
        <alternativeName>
            <fullName>Thyrotropin-releasing factor</fullName>
            <shortName>TRF</shortName>
        </alternativeName>
    </component>
</protein>
<organism>
    <name type="scientific">Rattus norvegicus</name>
    <name type="common">Rat</name>
    <dbReference type="NCBI Taxonomy" id="10116"/>
    <lineage>
        <taxon>Eukaryota</taxon>
        <taxon>Metazoa</taxon>
        <taxon>Chordata</taxon>
        <taxon>Craniata</taxon>
        <taxon>Vertebrata</taxon>
        <taxon>Euteleostomi</taxon>
        <taxon>Mammalia</taxon>
        <taxon>Eutheria</taxon>
        <taxon>Euarchontoglires</taxon>
        <taxon>Glires</taxon>
        <taxon>Rodentia</taxon>
        <taxon>Myomorpha</taxon>
        <taxon>Muroidea</taxon>
        <taxon>Muridae</taxon>
        <taxon>Murinae</taxon>
        <taxon>Rattus</taxon>
    </lineage>
</organism>
<reference key="1">
    <citation type="journal article" date="1986" name="Science">
        <title>Thyrotropin-releasing hormone precursor: characterization in rat brain.</title>
        <authorList>
            <person name="Lechan R.M."/>
            <person name="Wu P."/>
            <person name="Jackson I.M.D."/>
            <person name="Wolf H."/>
            <person name="Cooperman S."/>
            <person name="Mandel G."/>
            <person name="Goodman R.H."/>
        </authorList>
    </citation>
    <scope>NUCLEOTIDE SEQUENCE [MRNA]</scope>
</reference>
<reference key="2">
    <citation type="journal article" date="1988" name="J. Biol. Chem.">
        <title>Structure of the gene encoding rat thyrotropin releasing hormone.</title>
        <authorList>
            <person name="Lee S.L."/>
            <person name="Stewart K."/>
            <person name="Goodman R.H."/>
        </authorList>
    </citation>
    <scope>NUCLEOTIDE SEQUENCE [GENOMIC DNA]</scope>
</reference>
<reference key="3">
    <citation type="journal article" date="1989" name="Ann. N. Y. Acad. Sci.">
        <title>Characterization and expression of the gene-encoding rat thyrotropin-releasing hormone (TRH).</title>
        <authorList>
            <person name="Lee S.L."/>
            <person name="Sevarino K."/>
            <person name="Roos B.A."/>
            <person name="Goodman R.H."/>
        </authorList>
    </citation>
    <scope>NUCLEOTIDE SEQUENCE [GENOMIC DNA]</scope>
</reference>
<reference key="4">
    <citation type="journal article" date="1987" name="Trends Neurosci.">
        <title>Using the brain to screen cloned genes.</title>
        <authorList>
            <person name="Mandel G."/>
            <person name="Goodman R.H."/>
        </authorList>
    </citation>
    <scope>NUCLEOTIDE SEQUENCE [MRNA]</scope>
</reference>
<reference key="5">
    <citation type="journal article" date="1990" name="Endocrinology">
        <title>Processing of thyrotropin-releasing hormone (TRH) prohormone in the rat olfactory bulb generates novel TRH-related peptides.</title>
        <authorList>
            <person name="Bulant M."/>
            <person name="Beauvillain J.-C."/>
            <person name="Delfour A."/>
            <person name="Vaudry H."/>
            <person name="Nicolas P."/>
        </authorList>
    </citation>
    <scope>PROTEOLYTIC PROCESSING</scope>
    <scope>PYROGLUTAMATE FORMATION AT GLN-154 AND GLN-172</scope>
</reference>
<name>TRH_RAT</name>
<proteinExistence type="evidence at protein level"/>
<feature type="signal peptide">
    <location>
        <begin position="1"/>
        <end position="24"/>
    </location>
</feature>
<feature type="chain" id="PRO_0000022522" description="Pro-thyrotropin-releasing hormone">
    <location>
        <begin position="25"/>
        <end position="255"/>
    </location>
</feature>
<feature type="peptide" id="PRO_0000022523" description="Thyrotropin-releasing hormone">
    <location>
        <begin position="77"/>
        <end position="79"/>
    </location>
</feature>
<feature type="peptide" id="PRO_0000022524" description="Thyrotropin-releasing hormone">
    <location>
        <begin position="109"/>
        <end position="111"/>
    </location>
</feature>
<feature type="peptide" id="PRO_0000022525" description="Thyrotropin-releasing hormone">
    <location>
        <begin position="154"/>
        <end position="156"/>
    </location>
</feature>
<feature type="peptide" id="PRO_0000022526" description="Thyrotropin-releasing hormone">
    <location>
        <begin position="172"/>
        <end position="174"/>
    </location>
</feature>
<feature type="peptide" id="PRO_0000022527" description="Thyrotropin-releasing hormone">
    <location>
        <begin position="202"/>
        <end position="204"/>
    </location>
</feature>
<feature type="region of interest" description="Disordered" evidence="2">
    <location>
        <begin position="76"/>
        <end position="102"/>
    </location>
</feature>
<feature type="region of interest" description="Disordered" evidence="2">
    <location>
        <begin position="184"/>
        <end position="214"/>
    </location>
</feature>
<feature type="region of interest" description="Disordered" evidence="2">
    <location>
        <begin position="235"/>
        <end position="255"/>
    </location>
</feature>
<feature type="compositionally biased region" description="Basic and acidic residues" evidence="2">
    <location>
        <begin position="184"/>
        <end position="202"/>
    </location>
</feature>
<feature type="compositionally biased region" description="Polar residues" evidence="2">
    <location>
        <begin position="235"/>
        <end position="244"/>
    </location>
</feature>
<feature type="modified residue" description="Proline amide" evidence="1">
    <location>
        <position position="79"/>
    </location>
</feature>
<feature type="modified residue" description="Proline amide" evidence="1">
    <location>
        <position position="111"/>
    </location>
</feature>
<feature type="modified residue" description="Pyrrolidone carboxylic acid" evidence="3">
    <location>
        <position position="154"/>
    </location>
</feature>
<feature type="modified residue" description="Proline amide" evidence="1">
    <location>
        <position position="156"/>
    </location>
</feature>
<feature type="modified residue" description="Pyrrolidone carboxylic acid" evidence="3">
    <location>
        <position position="172"/>
    </location>
</feature>
<feature type="modified residue" description="Proline amide" evidence="1">
    <location>
        <position position="174"/>
    </location>
</feature>
<feature type="modified residue" description="Proline amide" evidence="1">
    <location>
        <position position="204"/>
    </location>
</feature>
<keyword id="KW-0027">Amidation</keyword>
<keyword id="KW-0165">Cleavage on pair of basic residues</keyword>
<keyword id="KW-0372">Hormone</keyword>
<keyword id="KW-0873">Pyrrolidone carboxylic acid</keyword>
<keyword id="KW-1185">Reference proteome</keyword>
<keyword id="KW-0677">Repeat</keyword>
<keyword id="KW-0964">Secreted</keyword>
<keyword id="KW-0732">Signal</keyword>
<dbReference type="EMBL" id="M12138">
    <property type="protein sequence ID" value="AAA42275.1"/>
    <property type="molecule type" value="mRNA"/>
</dbReference>
<dbReference type="EMBL" id="M23632">
    <property type="protein sequence ID" value="AAA65750.2"/>
    <property type="molecule type" value="Genomic_DNA"/>
</dbReference>
<dbReference type="EMBL" id="M23643">
    <property type="protein sequence ID" value="AAA65750.2"/>
    <property type="status" value="JOINED"/>
    <property type="molecule type" value="Genomic_DNA"/>
</dbReference>
<dbReference type="EMBL" id="M27465">
    <property type="protein sequence ID" value="AAA42239.1"/>
    <property type="molecule type" value="Genomic_DNA"/>
</dbReference>
<dbReference type="EMBL" id="M27464">
    <property type="protein sequence ID" value="AAA42239.1"/>
    <property type="status" value="JOINED"/>
    <property type="molecule type" value="Genomic_DNA"/>
</dbReference>
<dbReference type="EMBL" id="M36317">
    <property type="protein sequence ID" value="AAA42276.1"/>
    <property type="molecule type" value="mRNA"/>
</dbReference>
<dbReference type="PIR" id="A31773">
    <property type="entry name" value="RHRTT"/>
</dbReference>
<dbReference type="RefSeq" id="NP_037178.1">
    <property type="nucleotide sequence ID" value="NM_013046.3"/>
</dbReference>
<dbReference type="RefSeq" id="XP_006236961.1">
    <property type="nucleotide sequence ID" value="XM_006236899.2"/>
</dbReference>
<dbReference type="FunCoup" id="P01150">
    <property type="interactions" value="18"/>
</dbReference>
<dbReference type="STRING" id="10116.ENSRNOP00000015944"/>
<dbReference type="BindingDB" id="P01150"/>
<dbReference type="PhosphoSitePlus" id="P01150"/>
<dbReference type="PaxDb" id="10116-ENSRNOP00000015944"/>
<dbReference type="Ensembl" id="ENSRNOT00000015944.6">
    <property type="protein sequence ID" value="ENSRNOP00000015944.2"/>
    <property type="gene ID" value="ENSRNOG00000011824.6"/>
</dbReference>
<dbReference type="GeneID" id="25569"/>
<dbReference type="KEGG" id="rno:25569"/>
<dbReference type="AGR" id="RGD:3903"/>
<dbReference type="CTD" id="7200"/>
<dbReference type="RGD" id="3903">
    <property type="gene designation" value="Trh"/>
</dbReference>
<dbReference type="eggNOG" id="ENOG502RWH0">
    <property type="taxonomic scope" value="Eukaryota"/>
</dbReference>
<dbReference type="GeneTree" id="ENSGT00390000016951"/>
<dbReference type="HOGENOM" id="CLU_101029_0_0_1"/>
<dbReference type="InParanoid" id="P01150"/>
<dbReference type="OMA" id="QESFTCN"/>
<dbReference type="OrthoDB" id="9949225at2759"/>
<dbReference type="PhylomeDB" id="P01150"/>
<dbReference type="TreeFam" id="TF332073"/>
<dbReference type="Reactome" id="R-RNO-375276">
    <property type="pathway name" value="Peptide ligand-binding receptors"/>
</dbReference>
<dbReference type="Reactome" id="R-RNO-416476">
    <property type="pathway name" value="G alpha (q) signalling events"/>
</dbReference>
<dbReference type="PRO" id="PR:P01150"/>
<dbReference type="Proteomes" id="UP000002494">
    <property type="component" value="Chromosome 4"/>
</dbReference>
<dbReference type="Bgee" id="ENSRNOG00000011824">
    <property type="expression patterns" value="Expressed in testis and 8 other cell types or tissues"/>
</dbReference>
<dbReference type="ExpressionAtlas" id="P01150">
    <property type="expression patterns" value="baseline and differential"/>
</dbReference>
<dbReference type="GO" id="GO:0005576">
    <property type="term" value="C:extracellular region"/>
    <property type="evidence" value="ECO:0007669"/>
    <property type="project" value="UniProtKB-SubCell"/>
</dbReference>
<dbReference type="GO" id="GO:0030141">
    <property type="term" value="C:secretory granule"/>
    <property type="evidence" value="ECO:0000314"/>
    <property type="project" value="RGD"/>
</dbReference>
<dbReference type="GO" id="GO:0008437">
    <property type="term" value="F:thyrotropin-releasing hormone activity"/>
    <property type="evidence" value="ECO:0000314"/>
    <property type="project" value="RGD"/>
</dbReference>
<dbReference type="GO" id="GO:0007628">
    <property type="term" value="P:adult walking behavior"/>
    <property type="evidence" value="ECO:0000266"/>
    <property type="project" value="RGD"/>
</dbReference>
<dbReference type="GO" id="GO:0042755">
    <property type="term" value="P:eating behavior"/>
    <property type="evidence" value="ECO:0000314"/>
    <property type="project" value="RGD"/>
</dbReference>
<dbReference type="GO" id="GO:0001692">
    <property type="term" value="P:histamine metabolic process"/>
    <property type="evidence" value="ECO:0000314"/>
    <property type="project" value="RGD"/>
</dbReference>
<dbReference type="GO" id="GO:0009755">
    <property type="term" value="P:hormone-mediated signaling pathway"/>
    <property type="evidence" value="ECO:0007669"/>
    <property type="project" value="InterPro"/>
</dbReference>
<dbReference type="GO" id="GO:2000252">
    <property type="term" value="P:negative regulation of feeding behavior"/>
    <property type="evidence" value="ECO:0000314"/>
    <property type="project" value="RGD"/>
</dbReference>
<dbReference type="GO" id="GO:0014050">
    <property type="term" value="P:negative regulation of glutamate secretion"/>
    <property type="evidence" value="ECO:0000314"/>
    <property type="project" value="RGD"/>
</dbReference>
<dbReference type="GO" id="GO:0014054">
    <property type="term" value="P:positive regulation of gamma-aminobutyric acid secretion"/>
    <property type="evidence" value="ECO:0000314"/>
    <property type="project" value="RGD"/>
</dbReference>
<dbReference type="GO" id="GO:0032024">
    <property type="term" value="P:positive regulation of insulin secretion"/>
    <property type="evidence" value="ECO:0000314"/>
    <property type="project" value="RGD"/>
</dbReference>
<dbReference type="GO" id="GO:0051412">
    <property type="term" value="P:response to corticosterone"/>
    <property type="evidence" value="ECO:0000270"/>
    <property type="project" value="RGD"/>
</dbReference>
<dbReference type="GO" id="GO:0045471">
    <property type="term" value="P:response to ethanol"/>
    <property type="evidence" value="ECO:0000270"/>
    <property type="project" value="RGD"/>
</dbReference>
<dbReference type="GO" id="GO:0009749">
    <property type="term" value="P:response to glucose"/>
    <property type="evidence" value="ECO:0000270"/>
    <property type="project" value="RGD"/>
</dbReference>
<dbReference type="GO" id="GO:0001666">
    <property type="term" value="P:response to hypoxia"/>
    <property type="evidence" value="ECO:0000270"/>
    <property type="project" value="RGD"/>
</dbReference>
<dbReference type="InterPro" id="IPR008857">
    <property type="entry name" value="TRH"/>
</dbReference>
<dbReference type="PANTHER" id="PTHR17530">
    <property type="entry name" value="PRO-THYROTROPIN-RELEASING HORMONE"/>
    <property type="match status" value="1"/>
</dbReference>
<dbReference type="PANTHER" id="PTHR17530:SF2">
    <property type="entry name" value="PRO-THYROTROPIN-RELEASING HORMONE"/>
    <property type="match status" value="1"/>
</dbReference>
<dbReference type="Pfam" id="PF05438">
    <property type="entry name" value="TRH"/>
    <property type="match status" value="2"/>
</dbReference>
<dbReference type="PIRSF" id="PIRSF001795">
    <property type="entry name" value="TRH"/>
    <property type="match status" value="1"/>
</dbReference>
<evidence type="ECO:0000250" key="1"/>
<evidence type="ECO:0000256" key="2">
    <source>
        <dbReference type="SAM" id="MobiDB-lite"/>
    </source>
</evidence>
<evidence type="ECO:0000269" key="3">
    <source>
    </source>
</evidence>
<evidence type="ECO:0000305" key="4"/>
<comment type="function">
    <text>Functions as a regulator of the biosynthesis of TSH in the anterior pituitary gland and as a neurotransmitter/ neuromodulator in the central and peripheral nervous systems.</text>
</comment>
<comment type="subcellular location">
    <subcellularLocation>
        <location>Secreted</location>
    </subcellularLocation>
</comment>
<comment type="similarity">
    <text evidence="4">Belongs to the TRH family.</text>
</comment>
<accession>P01150</accession>